<dbReference type="EMBL" id="AP008232">
    <property type="protein sequence ID" value="BAE74269.1"/>
    <property type="molecule type" value="Genomic_DNA"/>
</dbReference>
<dbReference type="RefSeq" id="WP_011410855.1">
    <property type="nucleotide sequence ID" value="NC_007712.1"/>
</dbReference>
<dbReference type="SMR" id="Q2NUA6"/>
<dbReference type="STRING" id="343509.SG0994"/>
<dbReference type="KEGG" id="sgl:SG0994"/>
<dbReference type="eggNOG" id="COG0776">
    <property type="taxonomic scope" value="Bacteria"/>
</dbReference>
<dbReference type="HOGENOM" id="CLU_105066_2_0_6"/>
<dbReference type="OrthoDB" id="9804203at2"/>
<dbReference type="BioCyc" id="SGLO343509:SGP1_RS08490-MONOMER"/>
<dbReference type="Proteomes" id="UP000001932">
    <property type="component" value="Chromosome"/>
</dbReference>
<dbReference type="GO" id="GO:0005694">
    <property type="term" value="C:chromosome"/>
    <property type="evidence" value="ECO:0007669"/>
    <property type="project" value="InterPro"/>
</dbReference>
<dbReference type="GO" id="GO:0005829">
    <property type="term" value="C:cytosol"/>
    <property type="evidence" value="ECO:0007669"/>
    <property type="project" value="TreeGrafter"/>
</dbReference>
<dbReference type="GO" id="GO:0003677">
    <property type="term" value="F:DNA binding"/>
    <property type="evidence" value="ECO:0007669"/>
    <property type="project" value="UniProtKB-UniRule"/>
</dbReference>
<dbReference type="GO" id="GO:0030527">
    <property type="term" value="F:structural constituent of chromatin"/>
    <property type="evidence" value="ECO:0007669"/>
    <property type="project" value="InterPro"/>
</dbReference>
<dbReference type="GO" id="GO:0006310">
    <property type="term" value="P:DNA recombination"/>
    <property type="evidence" value="ECO:0007669"/>
    <property type="project" value="UniProtKB-UniRule"/>
</dbReference>
<dbReference type="GO" id="GO:0006355">
    <property type="term" value="P:regulation of DNA-templated transcription"/>
    <property type="evidence" value="ECO:0007669"/>
    <property type="project" value="UniProtKB-UniRule"/>
</dbReference>
<dbReference type="GO" id="GO:0006417">
    <property type="term" value="P:regulation of translation"/>
    <property type="evidence" value="ECO:0007669"/>
    <property type="project" value="UniProtKB-UniRule"/>
</dbReference>
<dbReference type="CDD" id="cd13836">
    <property type="entry name" value="IHF_B"/>
    <property type="match status" value="1"/>
</dbReference>
<dbReference type="FunFam" id="4.10.520.10:FF:000003">
    <property type="entry name" value="Integration host factor subunit beta"/>
    <property type="match status" value="1"/>
</dbReference>
<dbReference type="Gene3D" id="4.10.520.10">
    <property type="entry name" value="IHF-like DNA-binding proteins"/>
    <property type="match status" value="1"/>
</dbReference>
<dbReference type="HAMAP" id="MF_00381">
    <property type="entry name" value="IHF_beta"/>
    <property type="match status" value="1"/>
</dbReference>
<dbReference type="InterPro" id="IPR000119">
    <property type="entry name" value="Hist_DNA-bd"/>
</dbReference>
<dbReference type="InterPro" id="IPR020816">
    <property type="entry name" value="Histone-like_DNA-bd_CS"/>
</dbReference>
<dbReference type="InterPro" id="IPR010992">
    <property type="entry name" value="IHF-like_DNA-bd_dom_sf"/>
</dbReference>
<dbReference type="InterPro" id="IPR005685">
    <property type="entry name" value="IHF_beta"/>
</dbReference>
<dbReference type="NCBIfam" id="TIGR00988">
    <property type="entry name" value="hip"/>
    <property type="match status" value="1"/>
</dbReference>
<dbReference type="NCBIfam" id="NF001222">
    <property type="entry name" value="PRK00199.1"/>
    <property type="match status" value="1"/>
</dbReference>
<dbReference type="PANTHER" id="PTHR33175">
    <property type="entry name" value="DNA-BINDING PROTEIN HU"/>
    <property type="match status" value="1"/>
</dbReference>
<dbReference type="PANTHER" id="PTHR33175:SF5">
    <property type="entry name" value="INTEGRATION HOST FACTOR SUBUNIT BETA"/>
    <property type="match status" value="1"/>
</dbReference>
<dbReference type="Pfam" id="PF00216">
    <property type="entry name" value="Bac_DNA_binding"/>
    <property type="match status" value="1"/>
</dbReference>
<dbReference type="PRINTS" id="PR01727">
    <property type="entry name" value="DNABINDINGHU"/>
</dbReference>
<dbReference type="SMART" id="SM00411">
    <property type="entry name" value="BHL"/>
    <property type="match status" value="1"/>
</dbReference>
<dbReference type="SUPFAM" id="SSF47729">
    <property type="entry name" value="IHF-like DNA-binding proteins"/>
    <property type="match status" value="1"/>
</dbReference>
<dbReference type="PROSITE" id="PS00045">
    <property type="entry name" value="HISTONE_LIKE"/>
    <property type="match status" value="1"/>
</dbReference>
<organism>
    <name type="scientific">Sodalis glossinidius (strain morsitans)</name>
    <dbReference type="NCBI Taxonomy" id="343509"/>
    <lineage>
        <taxon>Bacteria</taxon>
        <taxon>Pseudomonadati</taxon>
        <taxon>Pseudomonadota</taxon>
        <taxon>Gammaproteobacteria</taxon>
        <taxon>Enterobacterales</taxon>
        <taxon>Bruguierivoracaceae</taxon>
        <taxon>Sodalis</taxon>
    </lineage>
</organism>
<name>IHFB_SODGM</name>
<accession>Q2NUA6</accession>
<evidence type="ECO:0000255" key="1">
    <source>
        <dbReference type="HAMAP-Rule" id="MF_00381"/>
    </source>
</evidence>
<sequence>MTKSELIERLAGQHAHIQAKVVEDAVKEMLEHMATTLASGERIEIRGFGSFSLHYRAPRIGRNPKTGDRVELEGKYVPHFKPGKELRDRANIYG</sequence>
<feature type="chain" id="PRO_1000060672" description="Integration host factor subunit beta">
    <location>
        <begin position="1"/>
        <end position="94"/>
    </location>
</feature>
<keyword id="KW-0233">DNA recombination</keyword>
<keyword id="KW-0238">DNA-binding</keyword>
<keyword id="KW-0804">Transcription</keyword>
<keyword id="KW-0805">Transcription regulation</keyword>
<keyword id="KW-0810">Translation regulation</keyword>
<comment type="function">
    <text evidence="1">This protein is one of the two subunits of integration host factor, a specific DNA-binding protein that functions in genetic recombination as well as in transcriptional and translational control.</text>
</comment>
<comment type="subunit">
    <text evidence="1">Heterodimer of an alpha and a beta chain.</text>
</comment>
<comment type="similarity">
    <text evidence="1">Belongs to the bacterial histone-like protein family.</text>
</comment>
<proteinExistence type="inferred from homology"/>
<reference key="1">
    <citation type="journal article" date="2006" name="Genome Res.">
        <title>Massive genome erosion and functional adaptations provide insights into the symbiotic lifestyle of Sodalis glossinidius in the tsetse host.</title>
        <authorList>
            <person name="Toh H."/>
            <person name="Weiss B.L."/>
            <person name="Perkin S.A.H."/>
            <person name="Yamashita A."/>
            <person name="Oshima K."/>
            <person name="Hattori M."/>
            <person name="Aksoy S."/>
        </authorList>
    </citation>
    <scope>NUCLEOTIDE SEQUENCE [LARGE SCALE GENOMIC DNA]</scope>
    <source>
        <strain>morsitans</strain>
    </source>
</reference>
<gene>
    <name evidence="1" type="primary">ihfB</name>
    <name evidence="1" type="synonym">himD</name>
    <name type="ordered locus">SG0994</name>
</gene>
<protein>
    <recommendedName>
        <fullName evidence="1">Integration host factor subunit beta</fullName>
        <shortName evidence="1">IHF-beta</shortName>
    </recommendedName>
</protein>